<evidence type="ECO:0000269" key="1">
    <source>
    </source>
</evidence>
<evidence type="ECO:0000305" key="2"/>
<organism>
    <name type="scientific">African swine fever virus (strain Badajoz 1971 Vero-adapted)</name>
    <name type="common">Ba71V</name>
    <name type="synonym">ASFV</name>
    <dbReference type="NCBI Taxonomy" id="10498"/>
    <lineage>
        <taxon>Viruses</taxon>
        <taxon>Varidnaviria</taxon>
        <taxon>Bamfordvirae</taxon>
        <taxon>Nucleocytoviricota</taxon>
        <taxon>Pokkesviricetes</taxon>
        <taxon>Asfuvirales</taxon>
        <taxon>Asfarviridae</taxon>
        <taxon>Asfivirus</taxon>
        <taxon>African swine fever virus</taxon>
    </lineage>
</organism>
<organismHost>
    <name type="scientific">Ornithodoros</name>
    <name type="common">relapsing fever ticks</name>
    <dbReference type="NCBI Taxonomy" id="6937"/>
</organismHost>
<organismHost>
    <name type="scientific">Sus scrofa</name>
    <name type="common">Pig</name>
    <dbReference type="NCBI Taxonomy" id="9823"/>
</organismHost>
<dbReference type="EMBL" id="M77121">
    <property type="protein sequence ID" value="AAA42706.1"/>
    <property type="molecule type" value="Genomic_DNA"/>
</dbReference>
<dbReference type="EMBL" id="U18466">
    <property type="protein sequence ID" value="AAA65372.1"/>
    <property type="molecule type" value="Genomic_DNA"/>
</dbReference>
<dbReference type="PIR" id="H39448">
    <property type="entry name" value="WMXFB7"/>
</dbReference>
<dbReference type="RefSeq" id="NP_042836.1">
    <property type="nucleotide sequence ID" value="NC_001659.2"/>
</dbReference>
<dbReference type="GeneID" id="22220372"/>
<dbReference type="KEGG" id="vg:22220372"/>
<dbReference type="Proteomes" id="UP000000624">
    <property type="component" value="Segment"/>
</dbReference>
<protein>
    <recommendedName>
        <fullName>Late protein I196L</fullName>
    </recommendedName>
</protein>
<feature type="chain" id="PRO_0000221957" description="Late protein I196L">
    <location>
        <begin position="1"/>
        <end position="196"/>
    </location>
</feature>
<feature type="repeat" description="1">
    <location>
        <begin position="28"/>
        <end position="48"/>
    </location>
</feature>
<feature type="repeat" description="2">
    <location>
        <begin position="49"/>
        <end position="70"/>
    </location>
</feature>
<feature type="repeat" description="3; approximate">
    <location>
        <begin position="71"/>
        <end position="92"/>
    </location>
</feature>
<gene>
    <name type="ordered locus">BA71V-146</name>
    <name type="ORF">I196L</name>
</gene>
<keyword id="KW-0426">Late protein</keyword>
<keyword id="KW-1185">Reference proteome</keyword>
<keyword id="KW-0677">Repeat</keyword>
<sequence>MLFRYLVWLFRFIEVKNVVSISLLVIGSNYLTTAISNNTSTTISPTTSSNYLLTAISNNTSTTILPTTTSSNYLTSAIPNIISDKEDDTPFSTDKTVSDGLSPITLYRAIRSTLNDTMTDILTRPYRPTTVIFHSDTPQPVKNATQGNIIKKTYRQVLTFFIQPNPLFPCFKNHEVFLNLANILNTILCIILIKNV</sequence>
<accession>P27943</accession>
<reference key="1">
    <citation type="journal article" date="1992" name="Virology">
        <title>Genes homologous to ubiquitin-conjugating proteins and eukaryotic transcription factor SII in African swine fever virus.</title>
        <authorList>
            <person name="Rodriguez J.M."/>
            <person name="Salas M.L."/>
            <person name="Vinuela E."/>
        </authorList>
    </citation>
    <scope>NUCLEOTIDE SEQUENCE [GENOMIC DNA]</scope>
</reference>
<reference key="2">
    <citation type="journal article" date="1995" name="Virology">
        <title>Analysis of the complete nucleotide sequence of African swine fever virus.</title>
        <authorList>
            <person name="Yanez R.J."/>
            <person name="Rodriguez J.M."/>
            <person name="Nogal M.L."/>
            <person name="Yuste L."/>
            <person name="Enriquez C."/>
            <person name="Rodriguez J.F."/>
            <person name="Vinuela E."/>
        </authorList>
    </citation>
    <scope>NUCLEOTIDE SEQUENCE [LARGE SCALE GENOMIC DNA]</scope>
</reference>
<reference key="3">
    <citation type="journal article" date="2020" name="J. Virol.">
        <title>The African Swine Fever Virus Transcriptome.</title>
        <authorList>
            <person name="Cackett G."/>
            <person name="Matelska D."/>
            <person name="Sykora M."/>
            <person name="Portugal R."/>
            <person name="Malecki M."/>
            <person name="Baehler J."/>
            <person name="Dixon L."/>
            <person name="Werner F."/>
        </authorList>
    </citation>
    <scope>INDUCTION</scope>
</reference>
<name>VF196_ASFB7</name>
<proteinExistence type="evidence at transcript level"/>
<comment type="induction">
    <text evidence="1">Expressed in the late phase of the viral replicative cycle.</text>
</comment>
<comment type="similarity">
    <text evidence="2">Belongs to the asfivirus I196L family.</text>
</comment>